<reference key="1">
    <citation type="journal article" date="2002" name="Nucleic Acids Res.">
        <title>The complete genomic sequence of Mycoplasma penetrans, an intracellular bacterial pathogen in humans.</title>
        <authorList>
            <person name="Sasaki Y."/>
            <person name="Ishikawa J."/>
            <person name="Yamashita A."/>
            <person name="Oshima K."/>
            <person name="Kenri T."/>
            <person name="Furuya K."/>
            <person name="Yoshino C."/>
            <person name="Horino A."/>
            <person name="Shiba T."/>
            <person name="Sasaki T."/>
            <person name="Hattori M."/>
        </authorList>
    </citation>
    <scope>NUCLEOTIDE SEQUENCE [LARGE SCALE GENOMIC DNA]</scope>
    <source>
        <strain>HF-2</strain>
    </source>
</reference>
<evidence type="ECO:0000255" key="1">
    <source>
        <dbReference type="HAMAP-Rule" id="MF_00182"/>
    </source>
</evidence>
<gene>
    <name evidence="1" type="primary">fmt</name>
    <name type="ordered locus">MYPE500</name>
</gene>
<comment type="function">
    <text evidence="1">Attaches a formyl group to the free amino group of methionyl-tRNA(fMet). The formyl group appears to play a dual role in the initiator identity of N-formylmethionyl-tRNA by promoting its recognition by IF2 and preventing the misappropriation of this tRNA by the elongation apparatus.</text>
</comment>
<comment type="catalytic activity">
    <reaction evidence="1">
        <text>L-methionyl-tRNA(fMet) + (6R)-10-formyltetrahydrofolate = N-formyl-L-methionyl-tRNA(fMet) + (6S)-5,6,7,8-tetrahydrofolate + H(+)</text>
        <dbReference type="Rhea" id="RHEA:24380"/>
        <dbReference type="Rhea" id="RHEA-COMP:9952"/>
        <dbReference type="Rhea" id="RHEA-COMP:9953"/>
        <dbReference type="ChEBI" id="CHEBI:15378"/>
        <dbReference type="ChEBI" id="CHEBI:57453"/>
        <dbReference type="ChEBI" id="CHEBI:78530"/>
        <dbReference type="ChEBI" id="CHEBI:78844"/>
        <dbReference type="ChEBI" id="CHEBI:195366"/>
        <dbReference type="EC" id="2.1.2.9"/>
    </reaction>
</comment>
<comment type="similarity">
    <text evidence="1">Belongs to the Fmt family.</text>
</comment>
<organism>
    <name type="scientific">Malacoplasma penetrans (strain HF-2)</name>
    <name type="common">Mycoplasma penetrans</name>
    <dbReference type="NCBI Taxonomy" id="272633"/>
    <lineage>
        <taxon>Bacteria</taxon>
        <taxon>Bacillati</taxon>
        <taxon>Mycoplasmatota</taxon>
        <taxon>Mycoplasmoidales</taxon>
        <taxon>Mycoplasmoidaceae</taxon>
        <taxon>Malacoplasma</taxon>
    </lineage>
</organism>
<feature type="chain" id="PRO_0000082996" description="Methionyl-tRNA formyltransferase">
    <location>
        <begin position="1"/>
        <end position="318"/>
    </location>
</feature>
<feature type="binding site" evidence="1">
    <location>
        <begin position="117"/>
        <end position="120"/>
    </location>
    <ligand>
        <name>(6S)-5,6,7,8-tetrahydrofolate</name>
        <dbReference type="ChEBI" id="CHEBI:57453"/>
    </ligand>
</feature>
<accession>Q8EX00</accession>
<keyword id="KW-0648">Protein biosynthesis</keyword>
<keyword id="KW-1185">Reference proteome</keyword>
<keyword id="KW-0808">Transferase</keyword>
<proteinExistence type="inferred from homology"/>
<name>FMT_MALP2</name>
<sequence>MGEKRNSCKNKKIVFMGTPEIATYALNALLEKSFDVVAVVCQPDKPIGRKKEIIFSSVKKLAIEKNIKFFQPNKIKEIENELKELNPFAFVTCAFGQFIPDSILSIPEFGCINIHASLLPKYRGGAPIHWAVINGEKETGVCLMRTIKQMDAGDVYCSRKVNIEESDTTSTLFKKMNNLVYDIVLNDLEKVFNLEYPPIKQDESKVSFAYNISKDDEKINFEKNAVEIVNLIRGLSETPGAYCFINDKKMKLFKAVSTNSKSNNAPGTINNISKEGILISTKDFDILVKEVQIEGKNRQEVKNILNGNSEIKIGVTLK</sequence>
<dbReference type="EC" id="2.1.2.9" evidence="1"/>
<dbReference type="EMBL" id="BA000026">
    <property type="protein sequence ID" value="BAC43840.1"/>
    <property type="molecule type" value="Genomic_DNA"/>
</dbReference>
<dbReference type="RefSeq" id="WP_011076876.1">
    <property type="nucleotide sequence ID" value="NC_004432.1"/>
</dbReference>
<dbReference type="SMR" id="Q8EX00"/>
<dbReference type="FunCoup" id="Q8EX00">
    <property type="interactions" value="237"/>
</dbReference>
<dbReference type="STRING" id="272633.gene:10731141"/>
<dbReference type="KEGG" id="mpe:MYPE500"/>
<dbReference type="eggNOG" id="COG0223">
    <property type="taxonomic scope" value="Bacteria"/>
</dbReference>
<dbReference type="HOGENOM" id="CLU_033347_1_1_14"/>
<dbReference type="InParanoid" id="Q8EX00"/>
<dbReference type="Proteomes" id="UP000002522">
    <property type="component" value="Chromosome"/>
</dbReference>
<dbReference type="GO" id="GO:0005829">
    <property type="term" value="C:cytosol"/>
    <property type="evidence" value="ECO:0007669"/>
    <property type="project" value="TreeGrafter"/>
</dbReference>
<dbReference type="GO" id="GO:0004479">
    <property type="term" value="F:methionyl-tRNA formyltransferase activity"/>
    <property type="evidence" value="ECO:0007669"/>
    <property type="project" value="UniProtKB-UniRule"/>
</dbReference>
<dbReference type="CDD" id="cd08646">
    <property type="entry name" value="FMT_core_Met-tRNA-FMT_N"/>
    <property type="match status" value="1"/>
</dbReference>
<dbReference type="CDD" id="cd08704">
    <property type="entry name" value="Met_tRNA_FMT_C"/>
    <property type="match status" value="1"/>
</dbReference>
<dbReference type="Gene3D" id="3.40.50.12230">
    <property type="match status" value="1"/>
</dbReference>
<dbReference type="HAMAP" id="MF_00182">
    <property type="entry name" value="Formyl_trans"/>
    <property type="match status" value="1"/>
</dbReference>
<dbReference type="InterPro" id="IPR005794">
    <property type="entry name" value="Fmt"/>
</dbReference>
<dbReference type="InterPro" id="IPR005793">
    <property type="entry name" value="Formyl_trans_C"/>
</dbReference>
<dbReference type="InterPro" id="IPR002376">
    <property type="entry name" value="Formyl_transf_N"/>
</dbReference>
<dbReference type="InterPro" id="IPR036477">
    <property type="entry name" value="Formyl_transf_N_sf"/>
</dbReference>
<dbReference type="InterPro" id="IPR011034">
    <property type="entry name" value="Formyl_transferase-like_C_sf"/>
</dbReference>
<dbReference type="InterPro" id="IPR001555">
    <property type="entry name" value="GART_AS"/>
</dbReference>
<dbReference type="InterPro" id="IPR044135">
    <property type="entry name" value="Met-tRNA-FMT_C"/>
</dbReference>
<dbReference type="InterPro" id="IPR041711">
    <property type="entry name" value="Met-tRNA-FMT_N"/>
</dbReference>
<dbReference type="NCBIfam" id="TIGR00460">
    <property type="entry name" value="fmt"/>
    <property type="match status" value="1"/>
</dbReference>
<dbReference type="PANTHER" id="PTHR11138">
    <property type="entry name" value="METHIONYL-TRNA FORMYLTRANSFERASE"/>
    <property type="match status" value="1"/>
</dbReference>
<dbReference type="PANTHER" id="PTHR11138:SF5">
    <property type="entry name" value="METHIONYL-TRNA FORMYLTRANSFERASE, MITOCHONDRIAL"/>
    <property type="match status" value="1"/>
</dbReference>
<dbReference type="Pfam" id="PF02911">
    <property type="entry name" value="Formyl_trans_C"/>
    <property type="match status" value="1"/>
</dbReference>
<dbReference type="Pfam" id="PF00551">
    <property type="entry name" value="Formyl_trans_N"/>
    <property type="match status" value="1"/>
</dbReference>
<dbReference type="SUPFAM" id="SSF50486">
    <property type="entry name" value="FMT C-terminal domain-like"/>
    <property type="match status" value="1"/>
</dbReference>
<dbReference type="SUPFAM" id="SSF53328">
    <property type="entry name" value="Formyltransferase"/>
    <property type="match status" value="1"/>
</dbReference>
<dbReference type="PROSITE" id="PS00373">
    <property type="entry name" value="GART"/>
    <property type="match status" value="1"/>
</dbReference>
<protein>
    <recommendedName>
        <fullName evidence="1">Methionyl-tRNA formyltransferase</fullName>
        <ecNumber evidence="1">2.1.2.9</ecNumber>
    </recommendedName>
</protein>